<sequence>MKHITIIGAGLAGTLCGLYLARRGYEVELFESRPDIRNSPTDYGRSINLALSCRGITALKAMNLLSEVNKIMVPMRARAIHEANGEIHYQPFGRHIDEYINAISRSDLNALLLNKAKLCPNIKLHFNMKLHSLDIHNKKIKFENKNGDFVEASYHRLIGADGAPSHVRDMLKNEGIVSASRDFLSHGYKELSISKKHTKGMAREHLHLWPRDSFMLLGNPNPDDSITGSLFLANEGKDSFAELNNEEKLHLFFKTQFPDAYAAMPNLVQEFFGNPTGHLSTIQCSPWYYKDECLLIGDAAHGIIPFFGQGMNSAFEDCRILDELLDEYQDDWSRVNSVFYEHRKVNTDAIAKMSMDNYHEIHSDIRNPKFILQKQIERELMLRYPEHYVSMHVLVMFTNTPYAKAMAIGELQSGLLEQICFPITDIKELNWQEVEKLLSLYDKKLAKII</sequence>
<feature type="chain" id="PRO_0000361940" description="Kynurenine 3-monooxygenase">
    <location>
        <begin position="1"/>
        <end position="449"/>
    </location>
</feature>
<protein>
    <recommendedName>
        <fullName evidence="1">Kynurenine 3-monooxygenase</fullName>
        <ecNumber evidence="1">1.14.13.9</ecNumber>
    </recommendedName>
    <alternativeName>
        <fullName evidence="1">Kynurenine 3-hydroxylase</fullName>
    </alternativeName>
</protein>
<name>KMO_LEGPL</name>
<gene>
    <name evidence="1" type="primary">kmo</name>
    <name type="ordered locus">lpl0923</name>
</gene>
<accession>Q5WY16</accession>
<reference key="1">
    <citation type="journal article" date="2004" name="Nat. Genet.">
        <title>Evidence in the Legionella pneumophila genome for exploitation of host cell functions and high genome plasticity.</title>
        <authorList>
            <person name="Cazalet C."/>
            <person name="Rusniok C."/>
            <person name="Brueggemann H."/>
            <person name="Zidane N."/>
            <person name="Magnier A."/>
            <person name="Ma L."/>
            <person name="Tichit M."/>
            <person name="Jarraud S."/>
            <person name="Bouchier C."/>
            <person name="Vandenesch F."/>
            <person name="Kunst F."/>
            <person name="Etienne J."/>
            <person name="Glaser P."/>
            <person name="Buchrieser C."/>
        </authorList>
    </citation>
    <scope>NUCLEOTIDE SEQUENCE [LARGE SCALE GENOMIC DNA]</scope>
    <source>
        <strain>Lens</strain>
    </source>
</reference>
<proteinExistence type="inferred from homology"/>
<evidence type="ECO:0000255" key="1">
    <source>
        <dbReference type="HAMAP-Rule" id="MF_01971"/>
    </source>
</evidence>
<dbReference type="EC" id="1.14.13.9" evidence="1"/>
<dbReference type="EMBL" id="CR628337">
    <property type="protein sequence ID" value="CAH15157.1"/>
    <property type="molecule type" value="Genomic_DNA"/>
</dbReference>
<dbReference type="RefSeq" id="WP_011215067.1">
    <property type="nucleotide sequence ID" value="NC_006369.1"/>
</dbReference>
<dbReference type="SMR" id="Q5WY16"/>
<dbReference type="KEGG" id="lpf:lpl0923"/>
<dbReference type="LegioList" id="lpl0923"/>
<dbReference type="HOGENOM" id="CLU_023210_0_1_6"/>
<dbReference type="UniPathway" id="UPA00253">
    <property type="reaction ID" value="UER00328"/>
</dbReference>
<dbReference type="Proteomes" id="UP000002517">
    <property type="component" value="Chromosome"/>
</dbReference>
<dbReference type="GO" id="GO:0071949">
    <property type="term" value="F:FAD binding"/>
    <property type="evidence" value="ECO:0007669"/>
    <property type="project" value="InterPro"/>
</dbReference>
<dbReference type="GO" id="GO:0004502">
    <property type="term" value="F:kynurenine 3-monooxygenase activity"/>
    <property type="evidence" value="ECO:0007669"/>
    <property type="project" value="UniProtKB-UniRule"/>
</dbReference>
<dbReference type="GO" id="GO:0043420">
    <property type="term" value="P:anthranilate metabolic process"/>
    <property type="evidence" value="ECO:0007669"/>
    <property type="project" value="UniProtKB-UniRule"/>
</dbReference>
<dbReference type="GO" id="GO:0070189">
    <property type="term" value="P:kynurenine metabolic process"/>
    <property type="evidence" value="ECO:0007669"/>
    <property type="project" value="TreeGrafter"/>
</dbReference>
<dbReference type="GO" id="GO:0006569">
    <property type="term" value="P:L-tryptophan catabolic process"/>
    <property type="evidence" value="ECO:0007669"/>
    <property type="project" value="UniProtKB-UniRule"/>
</dbReference>
<dbReference type="GO" id="GO:0009435">
    <property type="term" value="P:NAD biosynthetic process"/>
    <property type="evidence" value="ECO:0007669"/>
    <property type="project" value="UniProtKB-UniPathway"/>
</dbReference>
<dbReference type="GO" id="GO:0019805">
    <property type="term" value="P:quinolinate biosynthetic process"/>
    <property type="evidence" value="ECO:0007669"/>
    <property type="project" value="UniProtKB-UniRule"/>
</dbReference>
<dbReference type="FunFam" id="3.50.50.60:FF:000185">
    <property type="entry name" value="Kynurenine 3-monooxygenase"/>
    <property type="match status" value="1"/>
</dbReference>
<dbReference type="Gene3D" id="3.50.50.60">
    <property type="entry name" value="FAD/NAD(P)-binding domain"/>
    <property type="match status" value="1"/>
</dbReference>
<dbReference type="HAMAP" id="MF_01971">
    <property type="entry name" value="Kynurenine_monooxygenase"/>
    <property type="match status" value="1"/>
</dbReference>
<dbReference type="InterPro" id="IPR002938">
    <property type="entry name" value="FAD-bd"/>
</dbReference>
<dbReference type="InterPro" id="IPR036188">
    <property type="entry name" value="FAD/NAD-bd_sf"/>
</dbReference>
<dbReference type="InterPro" id="IPR027545">
    <property type="entry name" value="Kynurenine_monooxygenase"/>
</dbReference>
<dbReference type="PANTHER" id="PTHR46028">
    <property type="entry name" value="KYNURENINE 3-MONOOXYGENASE"/>
    <property type="match status" value="1"/>
</dbReference>
<dbReference type="PANTHER" id="PTHR46028:SF2">
    <property type="entry name" value="KYNURENINE 3-MONOOXYGENASE"/>
    <property type="match status" value="1"/>
</dbReference>
<dbReference type="Pfam" id="PF01494">
    <property type="entry name" value="FAD_binding_3"/>
    <property type="match status" value="1"/>
</dbReference>
<dbReference type="PRINTS" id="PR00420">
    <property type="entry name" value="RNGMNOXGNASE"/>
</dbReference>
<dbReference type="SUPFAM" id="SSF51905">
    <property type="entry name" value="FAD/NAD(P)-binding domain"/>
    <property type="match status" value="1"/>
</dbReference>
<comment type="function">
    <text evidence="1">Catalyzes the hydroxylation of L-kynurenine (L-Kyn) to form 3-hydroxy-L-kynurenine (L-3OHKyn). Required for synthesis of quinolinic acid.</text>
</comment>
<comment type="catalytic activity">
    <reaction evidence="1">
        <text>L-kynurenine + NADPH + O2 + H(+) = 3-hydroxy-L-kynurenine + NADP(+) + H2O</text>
        <dbReference type="Rhea" id="RHEA:20545"/>
        <dbReference type="ChEBI" id="CHEBI:15377"/>
        <dbReference type="ChEBI" id="CHEBI:15378"/>
        <dbReference type="ChEBI" id="CHEBI:15379"/>
        <dbReference type="ChEBI" id="CHEBI:57783"/>
        <dbReference type="ChEBI" id="CHEBI:57959"/>
        <dbReference type="ChEBI" id="CHEBI:58125"/>
        <dbReference type="ChEBI" id="CHEBI:58349"/>
        <dbReference type="EC" id="1.14.13.9"/>
    </reaction>
</comment>
<comment type="cofactor">
    <cofactor evidence="1">
        <name>FAD</name>
        <dbReference type="ChEBI" id="CHEBI:57692"/>
    </cofactor>
</comment>
<comment type="pathway">
    <text evidence="1">Cofactor biosynthesis; NAD(+) biosynthesis; quinolinate from L-kynurenine: step 1/3.</text>
</comment>
<comment type="similarity">
    <text evidence="1">Belongs to the aromatic-ring hydroxylase family. KMO subfamily.</text>
</comment>
<organism>
    <name type="scientific">Legionella pneumophila (strain Lens)</name>
    <dbReference type="NCBI Taxonomy" id="297245"/>
    <lineage>
        <taxon>Bacteria</taxon>
        <taxon>Pseudomonadati</taxon>
        <taxon>Pseudomonadota</taxon>
        <taxon>Gammaproteobacteria</taxon>
        <taxon>Legionellales</taxon>
        <taxon>Legionellaceae</taxon>
        <taxon>Legionella</taxon>
    </lineage>
</organism>
<keyword id="KW-0274">FAD</keyword>
<keyword id="KW-0285">Flavoprotein</keyword>
<keyword id="KW-0503">Monooxygenase</keyword>
<keyword id="KW-0521">NADP</keyword>
<keyword id="KW-0560">Oxidoreductase</keyword>
<keyword id="KW-0662">Pyridine nucleotide biosynthesis</keyword>